<name>RBFA_RUEST</name>
<comment type="function">
    <text evidence="1">One of several proteins that assist in the late maturation steps of the functional core of the 30S ribosomal subunit. Associates with free 30S ribosomal subunits (but not with 30S subunits that are part of 70S ribosomes or polysomes). Required for efficient processing of 16S rRNA. May interact with the 5'-terminal helix region of 16S rRNA.</text>
</comment>
<comment type="subunit">
    <text evidence="1">Monomer. Binds 30S ribosomal subunits, but not 50S ribosomal subunits or 70S ribosomes.</text>
</comment>
<comment type="subcellular location">
    <subcellularLocation>
        <location evidence="1">Cytoplasm</location>
    </subcellularLocation>
</comment>
<comment type="similarity">
    <text evidence="1">Belongs to the RbfA family.</text>
</comment>
<accession>Q1GKJ7</accession>
<sequence length="131" mass="14910">MAKNKFHDGPGPSQRQLRVGEVIRRTLSEVLARGDIHDPELNRLSITVGEVRTSPDLKIATAYVLPLGGKGQEDVLQLLARNKSELRRAIGKKTGLKFTPDLRFQIDETFDRMDDTRRLFNQDAVRRDLED</sequence>
<keyword id="KW-0963">Cytoplasm</keyword>
<keyword id="KW-1185">Reference proteome</keyword>
<keyword id="KW-0690">Ribosome biogenesis</keyword>
<evidence type="ECO:0000255" key="1">
    <source>
        <dbReference type="HAMAP-Rule" id="MF_00003"/>
    </source>
</evidence>
<organism>
    <name type="scientific">Ruegeria sp. (strain TM1040)</name>
    <name type="common">Silicibacter sp.</name>
    <dbReference type="NCBI Taxonomy" id="292414"/>
    <lineage>
        <taxon>Bacteria</taxon>
        <taxon>Pseudomonadati</taxon>
        <taxon>Pseudomonadota</taxon>
        <taxon>Alphaproteobacteria</taxon>
        <taxon>Rhodobacterales</taxon>
        <taxon>Roseobacteraceae</taxon>
        <taxon>Ruegeria</taxon>
    </lineage>
</organism>
<dbReference type="EMBL" id="CP000377">
    <property type="protein sequence ID" value="ABF62819.1"/>
    <property type="molecule type" value="Genomic_DNA"/>
</dbReference>
<dbReference type="RefSeq" id="WP_005636729.1">
    <property type="nucleotide sequence ID" value="NC_008044.1"/>
</dbReference>
<dbReference type="SMR" id="Q1GKJ7"/>
<dbReference type="STRING" id="292414.TM1040_0086"/>
<dbReference type="GeneID" id="28248266"/>
<dbReference type="KEGG" id="sit:TM1040_0086"/>
<dbReference type="eggNOG" id="COG0858">
    <property type="taxonomic scope" value="Bacteria"/>
</dbReference>
<dbReference type="HOGENOM" id="CLU_089475_1_0_5"/>
<dbReference type="OrthoDB" id="9805051at2"/>
<dbReference type="Proteomes" id="UP000000636">
    <property type="component" value="Chromosome"/>
</dbReference>
<dbReference type="GO" id="GO:0005829">
    <property type="term" value="C:cytosol"/>
    <property type="evidence" value="ECO:0007669"/>
    <property type="project" value="TreeGrafter"/>
</dbReference>
<dbReference type="GO" id="GO:0043024">
    <property type="term" value="F:ribosomal small subunit binding"/>
    <property type="evidence" value="ECO:0007669"/>
    <property type="project" value="TreeGrafter"/>
</dbReference>
<dbReference type="GO" id="GO:0030490">
    <property type="term" value="P:maturation of SSU-rRNA"/>
    <property type="evidence" value="ECO:0007669"/>
    <property type="project" value="UniProtKB-UniRule"/>
</dbReference>
<dbReference type="Gene3D" id="3.30.300.20">
    <property type="match status" value="1"/>
</dbReference>
<dbReference type="HAMAP" id="MF_00003">
    <property type="entry name" value="RbfA"/>
    <property type="match status" value="1"/>
</dbReference>
<dbReference type="InterPro" id="IPR015946">
    <property type="entry name" value="KH_dom-like_a/b"/>
</dbReference>
<dbReference type="InterPro" id="IPR000238">
    <property type="entry name" value="RbfA"/>
</dbReference>
<dbReference type="InterPro" id="IPR023799">
    <property type="entry name" value="RbfA_dom_sf"/>
</dbReference>
<dbReference type="InterPro" id="IPR020053">
    <property type="entry name" value="Ribosome-bd_factorA_CS"/>
</dbReference>
<dbReference type="NCBIfam" id="NF001802">
    <property type="entry name" value="PRK00521.2-5"/>
    <property type="match status" value="1"/>
</dbReference>
<dbReference type="PANTHER" id="PTHR33515">
    <property type="entry name" value="RIBOSOME-BINDING FACTOR A, CHLOROPLASTIC-RELATED"/>
    <property type="match status" value="1"/>
</dbReference>
<dbReference type="PANTHER" id="PTHR33515:SF1">
    <property type="entry name" value="RIBOSOME-BINDING FACTOR A, CHLOROPLASTIC-RELATED"/>
    <property type="match status" value="1"/>
</dbReference>
<dbReference type="Pfam" id="PF02033">
    <property type="entry name" value="RBFA"/>
    <property type="match status" value="1"/>
</dbReference>
<dbReference type="SUPFAM" id="SSF89919">
    <property type="entry name" value="Ribosome-binding factor A, RbfA"/>
    <property type="match status" value="1"/>
</dbReference>
<dbReference type="PROSITE" id="PS01319">
    <property type="entry name" value="RBFA"/>
    <property type="match status" value="1"/>
</dbReference>
<feature type="chain" id="PRO_1000000213" description="Ribosome-binding factor A">
    <location>
        <begin position="1"/>
        <end position="131"/>
    </location>
</feature>
<protein>
    <recommendedName>
        <fullName evidence="1">Ribosome-binding factor A</fullName>
    </recommendedName>
</protein>
<reference key="1">
    <citation type="submission" date="2006-05" db="EMBL/GenBank/DDBJ databases">
        <title>Complete sequence of chromosome of Silicibacter sp. TM1040.</title>
        <authorList>
            <consortium name="US DOE Joint Genome Institute"/>
            <person name="Copeland A."/>
            <person name="Lucas S."/>
            <person name="Lapidus A."/>
            <person name="Barry K."/>
            <person name="Detter J.C."/>
            <person name="Glavina del Rio T."/>
            <person name="Hammon N."/>
            <person name="Israni S."/>
            <person name="Dalin E."/>
            <person name="Tice H."/>
            <person name="Pitluck S."/>
            <person name="Brettin T."/>
            <person name="Bruce D."/>
            <person name="Han C."/>
            <person name="Tapia R."/>
            <person name="Goodwin L."/>
            <person name="Thompson L.S."/>
            <person name="Gilna P."/>
            <person name="Schmutz J."/>
            <person name="Larimer F."/>
            <person name="Land M."/>
            <person name="Hauser L."/>
            <person name="Kyrpides N."/>
            <person name="Kim E."/>
            <person name="Belas R."/>
            <person name="Moran M.A."/>
            <person name="Buchan A."/>
            <person name="Gonzalez J.M."/>
            <person name="Schell M.A."/>
            <person name="Sun F."/>
            <person name="Richardson P."/>
        </authorList>
    </citation>
    <scope>NUCLEOTIDE SEQUENCE [LARGE SCALE GENOMIC DNA]</scope>
    <source>
        <strain>TM1040</strain>
    </source>
</reference>
<gene>
    <name evidence="1" type="primary">rbfA</name>
    <name type="ordered locus">TM1040_0086</name>
</gene>
<proteinExistence type="inferred from homology"/>